<dbReference type="EC" id="3.6.1.31" evidence="1"/>
<dbReference type="EMBL" id="CP001186">
    <property type="protein sequence ID" value="ACK94819.1"/>
    <property type="molecule type" value="Genomic_DNA"/>
</dbReference>
<dbReference type="RefSeq" id="WP_000426355.1">
    <property type="nucleotide sequence ID" value="NC_011772.1"/>
</dbReference>
<dbReference type="SMR" id="B7INA5"/>
<dbReference type="GeneID" id="72448177"/>
<dbReference type="KEGG" id="bcg:BCG9842_B3879"/>
<dbReference type="HOGENOM" id="CLU_123337_0_0_9"/>
<dbReference type="UniPathway" id="UPA00031">
    <property type="reaction ID" value="UER00007"/>
</dbReference>
<dbReference type="Proteomes" id="UP000006744">
    <property type="component" value="Chromosome"/>
</dbReference>
<dbReference type="GO" id="GO:0005737">
    <property type="term" value="C:cytoplasm"/>
    <property type="evidence" value="ECO:0007669"/>
    <property type="project" value="UniProtKB-SubCell"/>
</dbReference>
<dbReference type="GO" id="GO:0005524">
    <property type="term" value="F:ATP binding"/>
    <property type="evidence" value="ECO:0007669"/>
    <property type="project" value="UniProtKB-KW"/>
</dbReference>
<dbReference type="GO" id="GO:0004636">
    <property type="term" value="F:phosphoribosyl-ATP diphosphatase activity"/>
    <property type="evidence" value="ECO:0007669"/>
    <property type="project" value="UniProtKB-UniRule"/>
</dbReference>
<dbReference type="GO" id="GO:0000105">
    <property type="term" value="P:L-histidine biosynthetic process"/>
    <property type="evidence" value="ECO:0007669"/>
    <property type="project" value="UniProtKB-UniRule"/>
</dbReference>
<dbReference type="CDD" id="cd11534">
    <property type="entry name" value="NTP-PPase_HisIE_like"/>
    <property type="match status" value="1"/>
</dbReference>
<dbReference type="Gene3D" id="1.10.287.1080">
    <property type="entry name" value="MazG-like"/>
    <property type="match status" value="1"/>
</dbReference>
<dbReference type="HAMAP" id="MF_01020">
    <property type="entry name" value="HisE"/>
    <property type="match status" value="1"/>
</dbReference>
<dbReference type="InterPro" id="IPR008179">
    <property type="entry name" value="HisE"/>
</dbReference>
<dbReference type="InterPro" id="IPR021130">
    <property type="entry name" value="PRib-ATP_PPHydrolase-like"/>
</dbReference>
<dbReference type="NCBIfam" id="TIGR03188">
    <property type="entry name" value="histidine_hisI"/>
    <property type="match status" value="1"/>
</dbReference>
<dbReference type="NCBIfam" id="NF001611">
    <property type="entry name" value="PRK00400.1-3"/>
    <property type="match status" value="1"/>
</dbReference>
<dbReference type="PANTHER" id="PTHR42945">
    <property type="entry name" value="HISTIDINE BIOSYNTHESIS BIFUNCTIONAL PROTEIN"/>
    <property type="match status" value="1"/>
</dbReference>
<dbReference type="PANTHER" id="PTHR42945:SF9">
    <property type="entry name" value="HISTIDINE BIOSYNTHESIS BIFUNCTIONAL PROTEIN HISIE"/>
    <property type="match status" value="1"/>
</dbReference>
<dbReference type="Pfam" id="PF01503">
    <property type="entry name" value="PRA-PH"/>
    <property type="match status" value="1"/>
</dbReference>
<dbReference type="SUPFAM" id="SSF101386">
    <property type="entry name" value="all-alpha NTP pyrophosphatases"/>
    <property type="match status" value="1"/>
</dbReference>
<gene>
    <name evidence="1" type="primary">hisE</name>
    <name type="ordered locus">BCG9842_B3879</name>
</gene>
<reference key="1">
    <citation type="submission" date="2008-10" db="EMBL/GenBank/DDBJ databases">
        <title>Genome sequence of Bacillus cereus G9842.</title>
        <authorList>
            <person name="Dodson R.J."/>
            <person name="Durkin A.S."/>
            <person name="Rosovitz M.J."/>
            <person name="Rasko D.A."/>
            <person name="Hoffmaster A."/>
            <person name="Ravel J."/>
            <person name="Sutton G."/>
        </authorList>
    </citation>
    <scope>NUCLEOTIDE SEQUENCE [LARGE SCALE GENOMIC DNA]</scope>
    <source>
        <strain>G9842</strain>
    </source>
</reference>
<protein>
    <recommendedName>
        <fullName evidence="1">Phosphoribosyl-ATP pyrophosphatase</fullName>
        <shortName evidence="1">PRA-PH</shortName>
        <ecNumber evidence="1">3.6.1.31</ecNumber>
    </recommendedName>
</protein>
<proteinExistence type="inferred from homology"/>
<comment type="catalytic activity">
    <reaction evidence="1">
        <text>1-(5-phospho-beta-D-ribosyl)-ATP + H2O = 1-(5-phospho-beta-D-ribosyl)-5'-AMP + diphosphate + H(+)</text>
        <dbReference type="Rhea" id="RHEA:22828"/>
        <dbReference type="ChEBI" id="CHEBI:15377"/>
        <dbReference type="ChEBI" id="CHEBI:15378"/>
        <dbReference type="ChEBI" id="CHEBI:33019"/>
        <dbReference type="ChEBI" id="CHEBI:59457"/>
        <dbReference type="ChEBI" id="CHEBI:73183"/>
        <dbReference type="EC" id="3.6.1.31"/>
    </reaction>
</comment>
<comment type="pathway">
    <text evidence="1">Amino-acid biosynthesis; L-histidine biosynthesis; L-histidine from 5-phospho-alpha-D-ribose 1-diphosphate: step 2/9.</text>
</comment>
<comment type="subcellular location">
    <subcellularLocation>
        <location evidence="1">Cytoplasm</location>
    </subcellularLocation>
</comment>
<comment type="similarity">
    <text evidence="1">Belongs to the PRA-PH family.</text>
</comment>
<name>HIS2_BACC2</name>
<keyword id="KW-0028">Amino-acid biosynthesis</keyword>
<keyword id="KW-0067">ATP-binding</keyword>
<keyword id="KW-0963">Cytoplasm</keyword>
<keyword id="KW-0368">Histidine biosynthesis</keyword>
<keyword id="KW-0378">Hydrolase</keyword>
<keyword id="KW-0547">Nucleotide-binding</keyword>
<feature type="chain" id="PRO_1000135298" description="Phosphoribosyl-ATP pyrophosphatase">
    <location>
        <begin position="1"/>
        <end position="107"/>
    </location>
</feature>
<organism>
    <name type="scientific">Bacillus cereus (strain G9842)</name>
    <dbReference type="NCBI Taxonomy" id="405531"/>
    <lineage>
        <taxon>Bacteria</taxon>
        <taxon>Bacillati</taxon>
        <taxon>Bacillota</taxon>
        <taxon>Bacilli</taxon>
        <taxon>Bacillales</taxon>
        <taxon>Bacillaceae</taxon>
        <taxon>Bacillus</taxon>
        <taxon>Bacillus cereus group</taxon>
    </lineage>
</organism>
<evidence type="ECO:0000255" key="1">
    <source>
        <dbReference type="HAMAP-Rule" id="MF_01020"/>
    </source>
</evidence>
<accession>B7INA5</accession>
<sequence>MENAFKLLYKTIEERKESPLPESYTNYLFSKGEDKILKKIGEECAEVIIACKNNDKEEVVKEMVDVFYHCFVLLAEKNIALEDVMREVKERNGKLSRVGDRREIDTL</sequence>